<keyword id="KW-0002">3D-structure</keyword>
<keyword id="KW-0007">Acetylation</keyword>
<keyword id="KW-0025">Alternative splicing</keyword>
<keyword id="KW-0963">Cytoplasm</keyword>
<keyword id="KW-0217">Developmental protein</keyword>
<keyword id="KW-0903">Direct protein sequencing</keyword>
<keyword id="KW-0488">Methylation</keyword>
<keyword id="KW-0507">mRNA processing</keyword>
<keyword id="KW-0508">mRNA splicing</keyword>
<keyword id="KW-0539">Nucleus</keyword>
<keyword id="KW-0597">Phosphoprotein</keyword>
<keyword id="KW-1267">Proteomics identification</keyword>
<keyword id="KW-1185">Reference proteome</keyword>
<reference key="1">
    <citation type="journal article" date="2007" name="BMC Genomics">
        <title>The full-ORF clone resource of the German cDNA consortium.</title>
        <authorList>
            <person name="Bechtel S."/>
            <person name="Rosenfelder H."/>
            <person name="Duda A."/>
            <person name="Schmidt C.P."/>
            <person name="Ernst U."/>
            <person name="Wellenreuther R."/>
            <person name="Mehrle A."/>
            <person name="Schuster C."/>
            <person name="Bahr A."/>
            <person name="Bloecker H."/>
            <person name="Heubner D."/>
            <person name="Hoerlein A."/>
            <person name="Michel G."/>
            <person name="Wedler H."/>
            <person name="Koehrer K."/>
            <person name="Ottenwaelder B."/>
            <person name="Poustka A."/>
            <person name="Wiemann S."/>
            <person name="Schupp I."/>
        </authorList>
    </citation>
    <scope>NUCLEOTIDE SEQUENCE [LARGE SCALE MRNA] (ISOFORM 1)</scope>
    <source>
        <tissue>Fetal kidney</tissue>
        <tissue>Testis</tissue>
    </source>
</reference>
<reference key="2">
    <citation type="journal article" date="2004" name="Genome Res.">
        <title>The status, quality, and expansion of the NIH full-length cDNA project: the Mammalian Gene Collection (MGC).</title>
        <authorList>
            <consortium name="The MGC Project Team"/>
        </authorList>
    </citation>
    <scope>NUCLEOTIDE SEQUENCE [LARGE SCALE MRNA] (ISOFORM 4)</scope>
    <scope>NUCLEOTIDE SEQUENCE [LARGE SCALE MRNA] OF 615-1812 (ISOFORM 1)</scope>
    <scope>NUCLEOTIDE SEQUENCE [LARGE SCALE MRNA] OF 648-1812 (ISOFORM 2)</scope>
    <source>
        <tissue>Cervix</tissue>
        <tissue>Lung</tissue>
        <tissue>Uterus</tissue>
    </source>
</reference>
<reference key="3">
    <citation type="submission" date="2007-07" db="UniProtKB">
        <authorList>
            <person name="Bienvenut W.V."/>
            <person name="Heiserich L."/>
            <person name="Boulahbel H."/>
            <person name="Gottlieb E."/>
        </authorList>
    </citation>
    <scope>PROTEIN SEQUENCE OF 2-16; 385-393; 534-545; 666-674; 1198-1216; 1256-1268; 1389-1402 AND 1446-1458</scope>
    <scope>CLEAVAGE OF INITIATOR METHIONINE</scope>
    <scope>ACETYLATION AT ALA-2</scope>
    <scope>IDENTIFICATION BY MASS SPECTROMETRY</scope>
    <source>
        <tissue>Colon carcinoma</tissue>
    </source>
</reference>
<reference key="4">
    <citation type="submission" date="1998-12" db="EMBL/GenBank/DDBJ databases">
        <authorList>
            <person name="Zhao B."/>
            <person name="Xu Y.Y."/>
            <person name="Liu Y.Q."/>
            <person name="Wang X.Y."/>
            <person name="Liu B."/>
            <person name="Ye J."/>
            <person name="Song L."/>
            <person name="Zhao Y."/>
            <person name="Cao H.Q."/>
            <person name="Zhao X.W."/>
            <person name="Gao Y."/>
            <person name="Liu L.S."/>
            <person name="Ding J.F."/>
            <person name="Gao R.L."/>
            <person name="Wu Q.Y."/>
            <person name="Qiang B.Q."/>
            <person name="Yuan J.G."/>
            <person name="Liew C.C."/>
            <person name="Zhao M.S."/>
            <person name="Hui R.T."/>
        </authorList>
    </citation>
    <scope>NUCLEOTIDE SEQUENCE [LARGE SCALE MRNA] OF 3-1812 (ISOFORM 4)</scope>
    <source>
        <tissue>Aorta</tissue>
    </source>
</reference>
<reference key="5">
    <citation type="journal article" date="2000" name="DNA Res.">
        <title>Prediction of the coding sequences of unidentified human genes. XVI. The complete sequences of 150 new cDNA clones from brain which code for large proteins in vitro.</title>
        <authorList>
            <person name="Nagase T."/>
            <person name="Kikuno R."/>
            <person name="Ishikawa K."/>
            <person name="Hirosawa M."/>
            <person name="Ohara O."/>
        </authorList>
    </citation>
    <scope>NUCLEOTIDE SEQUENCE [LARGE SCALE MRNA] OF 3-1812 (ISOFORM 3)</scope>
    <source>
        <tissue>Brain</tissue>
    </source>
</reference>
<reference key="6">
    <citation type="journal article" date="2004" name="Nat. Genet.">
        <title>Complete sequencing and characterization of 21,243 full-length human cDNAs.</title>
        <authorList>
            <person name="Ota T."/>
            <person name="Suzuki Y."/>
            <person name="Nishikawa T."/>
            <person name="Otsuki T."/>
            <person name="Sugiyama T."/>
            <person name="Irie R."/>
            <person name="Wakamatsu A."/>
            <person name="Hayashi K."/>
            <person name="Sato H."/>
            <person name="Nagai K."/>
            <person name="Kimura K."/>
            <person name="Makita H."/>
            <person name="Sekine M."/>
            <person name="Obayashi M."/>
            <person name="Nishi T."/>
            <person name="Shibahara T."/>
            <person name="Tanaka T."/>
            <person name="Ishii S."/>
            <person name="Yamamoto J."/>
            <person name="Saito K."/>
            <person name="Kawai Y."/>
            <person name="Isono Y."/>
            <person name="Nakamura Y."/>
            <person name="Nagahari K."/>
            <person name="Murakami K."/>
            <person name="Yasuda T."/>
            <person name="Iwayanagi T."/>
            <person name="Wagatsuma M."/>
            <person name="Shiratori A."/>
            <person name="Sudo H."/>
            <person name="Hosoiri T."/>
            <person name="Kaku Y."/>
            <person name="Kodaira H."/>
            <person name="Kondo H."/>
            <person name="Sugawara M."/>
            <person name="Takahashi M."/>
            <person name="Kanda K."/>
            <person name="Yokoi T."/>
            <person name="Furuya T."/>
            <person name="Kikkawa E."/>
            <person name="Omura Y."/>
            <person name="Abe K."/>
            <person name="Kamihara K."/>
            <person name="Katsuta N."/>
            <person name="Sato K."/>
            <person name="Tanikawa M."/>
            <person name="Yamazaki M."/>
            <person name="Ninomiya K."/>
            <person name="Ishibashi T."/>
            <person name="Yamashita H."/>
            <person name="Murakawa K."/>
            <person name="Fujimori K."/>
            <person name="Tanai H."/>
            <person name="Kimata M."/>
            <person name="Watanabe M."/>
            <person name="Hiraoka S."/>
            <person name="Chiba Y."/>
            <person name="Ishida S."/>
            <person name="Ono Y."/>
            <person name="Takiguchi S."/>
            <person name="Watanabe S."/>
            <person name="Yosida M."/>
            <person name="Hotuta T."/>
            <person name="Kusano J."/>
            <person name="Kanehori K."/>
            <person name="Takahashi-Fujii A."/>
            <person name="Hara H."/>
            <person name="Tanase T.-O."/>
            <person name="Nomura Y."/>
            <person name="Togiya S."/>
            <person name="Komai F."/>
            <person name="Hara R."/>
            <person name="Takeuchi K."/>
            <person name="Arita M."/>
            <person name="Imose N."/>
            <person name="Musashino K."/>
            <person name="Yuuki H."/>
            <person name="Oshima A."/>
            <person name="Sasaki N."/>
            <person name="Aotsuka S."/>
            <person name="Yoshikawa Y."/>
            <person name="Matsunawa H."/>
            <person name="Ichihara T."/>
            <person name="Shiohata N."/>
            <person name="Sano S."/>
            <person name="Moriya S."/>
            <person name="Momiyama H."/>
            <person name="Satoh N."/>
            <person name="Takami S."/>
            <person name="Terashima Y."/>
            <person name="Suzuki O."/>
            <person name="Nakagawa S."/>
            <person name="Senoh A."/>
            <person name="Mizoguchi H."/>
            <person name="Goto Y."/>
            <person name="Shimizu F."/>
            <person name="Wakebe H."/>
            <person name="Hishigaki H."/>
            <person name="Watanabe T."/>
            <person name="Sugiyama A."/>
            <person name="Takemoto M."/>
            <person name="Kawakami B."/>
            <person name="Yamazaki M."/>
            <person name="Watanabe K."/>
            <person name="Kumagai A."/>
            <person name="Itakura S."/>
            <person name="Fukuzumi Y."/>
            <person name="Fujimori Y."/>
            <person name="Komiyama M."/>
            <person name="Tashiro H."/>
            <person name="Tanigami A."/>
            <person name="Fujiwara T."/>
            <person name="Ono T."/>
            <person name="Yamada K."/>
            <person name="Fujii Y."/>
            <person name="Ozaki K."/>
            <person name="Hirao M."/>
            <person name="Ohmori Y."/>
            <person name="Kawabata A."/>
            <person name="Hikiji T."/>
            <person name="Kobatake N."/>
            <person name="Inagaki H."/>
            <person name="Ikema Y."/>
            <person name="Okamoto S."/>
            <person name="Okitani R."/>
            <person name="Kawakami T."/>
            <person name="Noguchi S."/>
            <person name="Itoh T."/>
            <person name="Shigeta K."/>
            <person name="Senba T."/>
            <person name="Matsumura K."/>
            <person name="Nakajima Y."/>
            <person name="Mizuno T."/>
            <person name="Morinaga M."/>
            <person name="Sasaki M."/>
            <person name="Togashi T."/>
            <person name="Oyama M."/>
            <person name="Hata H."/>
            <person name="Watanabe M."/>
            <person name="Komatsu T."/>
            <person name="Mizushima-Sugano J."/>
            <person name="Satoh T."/>
            <person name="Shirai Y."/>
            <person name="Takahashi Y."/>
            <person name="Nakagawa K."/>
            <person name="Okumura K."/>
            <person name="Nagase T."/>
            <person name="Nomura N."/>
            <person name="Kikuchi H."/>
            <person name="Masuho Y."/>
            <person name="Yamashita R."/>
            <person name="Nakai K."/>
            <person name="Yada T."/>
            <person name="Nakamura Y."/>
            <person name="Ohara O."/>
            <person name="Isogai T."/>
            <person name="Sugano S."/>
        </authorList>
    </citation>
    <scope>NUCLEOTIDE SEQUENCE [LARGE SCALE MRNA] OF 721-1812 (ISOFORM 1)</scope>
    <source>
        <tissue>Ileal mucosa</tissue>
        <tissue>Teratocarcinoma</tissue>
    </source>
</reference>
<reference key="7">
    <citation type="journal article" date="2001" name="Genetics">
        <title>Molecular identification of virilizer, a gene required for the expression of the sex-determining gene Sex-lethal in Drosophila melanogaster.</title>
        <authorList>
            <person name="Niessen M."/>
            <person name="Schneiter R."/>
            <person name="Nothiger R."/>
        </authorList>
    </citation>
    <scope>IDENTIFICATION</scope>
</reference>
<reference key="8">
    <citation type="journal article" date="2006" name="Cell">
        <title>Global, in vivo, and site-specific phosphorylation dynamics in signaling networks.</title>
        <authorList>
            <person name="Olsen J.V."/>
            <person name="Blagoev B."/>
            <person name="Gnad F."/>
            <person name="Macek B."/>
            <person name="Kumar C."/>
            <person name="Mortensen P."/>
            <person name="Mann M."/>
        </authorList>
    </citation>
    <scope>PHOSPHORYLATION [LARGE SCALE ANALYSIS] AT SER-173 AND THR-184</scope>
    <scope>IDENTIFICATION BY MASS SPECTROMETRY [LARGE SCALE ANALYSIS]</scope>
    <source>
        <tissue>Cervix carcinoma</tissue>
    </source>
</reference>
<reference key="9">
    <citation type="journal article" date="2006" name="Nat. Biotechnol.">
        <title>A probability-based approach for high-throughput protein phosphorylation analysis and site localization.</title>
        <authorList>
            <person name="Beausoleil S.A."/>
            <person name="Villen J."/>
            <person name="Gerber S.A."/>
            <person name="Rush J."/>
            <person name="Gygi S.P."/>
        </authorList>
    </citation>
    <scope>PHOSPHORYLATION [LARGE SCALE ANALYSIS] AT SER-1579</scope>
    <scope>IDENTIFICATION BY MASS SPECTROMETRY [LARGE SCALE ANALYSIS]</scope>
    <source>
        <tissue>Cervix carcinoma</tissue>
    </source>
</reference>
<reference key="10">
    <citation type="journal article" date="2008" name="Proc. Natl. Acad. Sci. U.S.A.">
        <title>A quantitative atlas of mitotic phosphorylation.</title>
        <authorList>
            <person name="Dephoure N."/>
            <person name="Zhou C."/>
            <person name="Villen J."/>
            <person name="Beausoleil S.A."/>
            <person name="Bakalarski C.E."/>
            <person name="Elledge S.J."/>
            <person name="Gygi S.P."/>
        </authorList>
    </citation>
    <scope>PHOSPHORYLATION [LARGE SCALE ANALYSIS] AT SER-138; SER-1579 AND THR-1708</scope>
    <scope>IDENTIFICATION BY MASS SPECTROMETRY [LARGE SCALE ANALYSIS]</scope>
    <source>
        <tissue>Cervix carcinoma</tissue>
    </source>
</reference>
<reference key="11">
    <citation type="journal article" date="2009" name="Anal. Chem.">
        <title>Lys-N and trypsin cover complementary parts of the phosphoproteome in a refined SCX-based approach.</title>
        <authorList>
            <person name="Gauci S."/>
            <person name="Helbig A.O."/>
            <person name="Slijper M."/>
            <person name="Krijgsveld J."/>
            <person name="Heck A.J."/>
            <person name="Mohammed S."/>
        </authorList>
    </citation>
    <scope>ACETYLATION [LARGE SCALE ANALYSIS] AT ALA-2</scope>
    <scope>CLEAVAGE OF INITIATOR METHIONINE [LARGE SCALE ANALYSIS]</scope>
    <scope>IDENTIFICATION BY MASS SPECTROMETRY [LARGE SCALE ANALYSIS]</scope>
</reference>
<reference key="12">
    <citation type="journal article" date="2009" name="Sci. Signal.">
        <title>Quantitative phosphoproteomic analysis of T cell receptor signaling reveals system-wide modulation of protein-protein interactions.</title>
        <authorList>
            <person name="Mayya V."/>
            <person name="Lundgren D.H."/>
            <person name="Hwang S.-I."/>
            <person name="Rezaul K."/>
            <person name="Wu L."/>
            <person name="Eng J.K."/>
            <person name="Rodionov V."/>
            <person name="Han D.K."/>
        </authorList>
    </citation>
    <scope>PHOSPHORYLATION [LARGE SCALE ANALYSIS] AT SER-138; TYR-914 AND SER-1579</scope>
    <scope>IDENTIFICATION BY MASS SPECTROMETRY [LARGE SCALE ANALYSIS]</scope>
    <source>
        <tissue>Leukemic T-cell</tissue>
    </source>
</reference>
<reference key="13">
    <citation type="journal article" date="2010" name="Sci. Signal.">
        <title>Quantitative phosphoproteomics reveals widespread full phosphorylation site occupancy during mitosis.</title>
        <authorList>
            <person name="Olsen J.V."/>
            <person name="Vermeulen M."/>
            <person name="Santamaria A."/>
            <person name="Kumar C."/>
            <person name="Miller M.L."/>
            <person name="Jensen L.J."/>
            <person name="Gnad F."/>
            <person name="Cox J."/>
            <person name="Jensen T.S."/>
            <person name="Nigg E.A."/>
            <person name="Brunak S."/>
            <person name="Mann M."/>
        </authorList>
    </citation>
    <scope>PHOSPHORYLATION [LARGE SCALE ANALYSIS] AT SER-133; SER-222 AND SER-1579</scope>
    <scope>IDENTIFICATION BY MASS SPECTROMETRY [LARGE SCALE ANALYSIS]</scope>
    <source>
        <tissue>Cervix carcinoma</tissue>
    </source>
</reference>
<reference key="14">
    <citation type="journal article" date="2011" name="BMC Syst. Biol.">
        <title>Initial characterization of the human central proteome.</title>
        <authorList>
            <person name="Burkard T.R."/>
            <person name="Planyavsky M."/>
            <person name="Kaupe I."/>
            <person name="Breitwieser F.P."/>
            <person name="Buerckstuemmer T."/>
            <person name="Bennett K.L."/>
            <person name="Superti-Furga G."/>
            <person name="Colinge J."/>
        </authorList>
    </citation>
    <scope>IDENTIFICATION BY MASS SPECTROMETRY [LARGE SCALE ANALYSIS]</scope>
</reference>
<reference key="15">
    <citation type="journal article" date="2011" name="Sci. Signal.">
        <title>System-wide temporal characterization of the proteome and phosphoproteome of human embryonic stem cell differentiation.</title>
        <authorList>
            <person name="Rigbolt K.T."/>
            <person name="Prokhorova T.A."/>
            <person name="Akimov V."/>
            <person name="Henningsen J."/>
            <person name="Johansen P.T."/>
            <person name="Kratchmarova I."/>
            <person name="Kassem M."/>
            <person name="Mann M."/>
            <person name="Olsen J.V."/>
            <person name="Blagoev B."/>
        </authorList>
    </citation>
    <scope>PHOSPHORYLATION [LARGE SCALE ANALYSIS] AT THR-184</scope>
    <scope>IDENTIFICATION BY MASS SPECTROMETRY [LARGE SCALE ANALYSIS]</scope>
</reference>
<reference key="16">
    <citation type="journal article" date="2013" name="J. Biol. Chem.">
        <title>Identification of Wilms' tumor 1-associating protein complex and its role in alternative splicing and the cell cycle.</title>
        <authorList>
            <person name="Horiuchi K."/>
            <person name="Kawamura T."/>
            <person name="Iwanari H."/>
            <person name="Ohashi R."/>
            <person name="Naito M."/>
            <person name="Kodama T."/>
            <person name="Hamakubo T."/>
        </authorList>
    </citation>
    <scope>SUBCELLULAR LOCATION</scope>
    <scope>INTERACTION WITH WTAP</scope>
    <scope>IDENTIFICATION IN A MACOM-LIKE COMPLEX</scope>
</reference>
<reference key="17">
    <citation type="journal article" date="2013" name="J. Proteome Res.">
        <title>Toward a comprehensive characterization of a human cancer cell phosphoproteome.</title>
        <authorList>
            <person name="Zhou H."/>
            <person name="Di Palma S."/>
            <person name="Preisinger C."/>
            <person name="Peng M."/>
            <person name="Polat A.N."/>
            <person name="Heck A.J."/>
            <person name="Mohammed S."/>
        </authorList>
    </citation>
    <scope>PHOSPHORYLATION [LARGE SCALE ANALYSIS] AT SER-133; SER-138; SER-173; THR-184 AND SER-1579</scope>
    <scope>IDENTIFICATION BY MASS SPECTROMETRY [LARGE SCALE ANALYSIS]</scope>
    <source>
        <tissue>Cervix carcinoma</tissue>
        <tissue>Erythroleukemia</tissue>
    </source>
</reference>
<reference key="18">
    <citation type="journal article" date="2014" name="Cell Rep.">
        <title>Perturbation of m6A writers reveals two distinct classes of mRNA methylation at internal and 5' sites.</title>
        <authorList>
            <person name="Schwartz S."/>
            <person name="Mumbach M.R."/>
            <person name="Jovanovic M."/>
            <person name="Wang T."/>
            <person name="Maciag K."/>
            <person name="Bushkin G.G."/>
            <person name="Mertins P."/>
            <person name="Ter-Ovanesyan D."/>
            <person name="Habib N."/>
            <person name="Cacchiarelli D."/>
            <person name="Sanjana N.E."/>
            <person name="Freinkman E."/>
            <person name="Pacold M.E."/>
            <person name="Satija R."/>
            <person name="Mikkelsen T.S."/>
            <person name="Hacohen N."/>
            <person name="Zhang F."/>
            <person name="Carr S.A."/>
            <person name="Lander E.S."/>
            <person name="Regev A."/>
        </authorList>
    </citation>
    <scope>FUNCTION</scope>
    <scope>ASSOCIATION WITH THE WMM COMPLEX</scope>
</reference>
<reference key="19">
    <citation type="journal article" date="2014" name="J. Proteomics">
        <title>An enzyme assisted RP-RPLC approach for in-depth analysis of human liver phosphoproteome.</title>
        <authorList>
            <person name="Bian Y."/>
            <person name="Song C."/>
            <person name="Cheng K."/>
            <person name="Dong M."/>
            <person name="Wang F."/>
            <person name="Huang J."/>
            <person name="Sun D."/>
            <person name="Wang L."/>
            <person name="Ye M."/>
            <person name="Zou H."/>
        </authorList>
    </citation>
    <scope>PHOSPHORYLATION [LARGE SCALE ANALYSIS] AT SER-138 AND THR-184</scope>
    <scope>IDENTIFICATION BY MASS SPECTROMETRY [LARGE SCALE ANALYSIS]</scope>
    <source>
        <tissue>Liver</tissue>
    </source>
</reference>
<reference key="20">
    <citation type="journal article" date="2014" name="Mol. Cell. Proteomics">
        <title>Immunoaffinity enrichment and mass spectrometry analysis of protein methylation.</title>
        <authorList>
            <person name="Guo A."/>
            <person name="Gu H."/>
            <person name="Zhou J."/>
            <person name="Mulhern D."/>
            <person name="Wang Y."/>
            <person name="Lee K.A."/>
            <person name="Yang V."/>
            <person name="Aguiar M."/>
            <person name="Kornhauser J."/>
            <person name="Jia X."/>
            <person name="Ren J."/>
            <person name="Beausoleil S.A."/>
            <person name="Silva J.C."/>
            <person name="Vemulapalli V."/>
            <person name="Bedford M.T."/>
            <person name="Comb M.J."/>
        </authorList>
    </citation>
    <scope>METHYLATION [LARGE SCALE ANALYSIS] AT ARG-1723; ARG-1773; ARG-1775 AND ARG-1793</scope>
    <scope>IDENTIFICATION BY MASS SPECTROMETRY [LARGE SCALE ANALYSIS]</scope>
    <source>
        <tissue>Colon carcinoma</tissue>
    </source>
</reference>
<reference key="21">
    <citation type="journal article" date="2018" name="Cell Discov.">
        <title>VIRMA mediates preferential m6A mRNA methylation in 3'UTR and near stop codon and associates with alternative polyadenylation.</title>
        <authorList>
            <person name="Yue Y."/>
            <person name="Liu J."/>
            <person name="Cui X."/>
            <person name="Cao J."/>
            <person name="Luo G."/>
            <person name="Zhang Z."/>
            <person name="Cheng T."/>
            <person name="Gao M."/>
            <person name="Shu X."/>
            <person name="Ma H."/>
            <person name="Wang F."/>
            <person name="Wang X."/>
            <person name="Shen B."/>
            <person name="Wang Y."/>
            <person name="Feng X."/>
            <person name="He C."/>
            <person name="Liu J."/>
        </authorList>
    </citation>
    <scope>FUNCTION</scope>
    <scope>IDENTIFICATION IN THE WMM COMPLEX</scope>
    <scope>INTERACTION WITH NUDT21 AND CPSF6</scope>
</reference>
<name>VIR_HUMAN</name>
<proteinExistence type="evidence at protein level"/>
<protein>
    <recommendedName>
        <fullName evidence="10">Protein virilizer homolog</fullName>
    </recommendedName>
</protein>
<accession>Q69YN4</accession>
<accession>Q2M1N0</accession>
<accession>Q6AHX9</accession>
<accession>Q6NT78</accession>
<accession>Q7Z6C7</accession>
<accession>Q8IXH4</accession>
<accession>Q9BTH4</accession>
<accession>Q9H9C9</accession>
<accession>Q9NWR3</accession>
<accession>Q9P2B8</accession>
<accession>Q9UFW1</accession>
<comment type="function">
    <text evidence="4 5">Associated component of the WMM complex, a complex that mediates N6-methyladenosine (m6A) methylation of RNAs, a modification that plays a role in the efficiency of mRNA splicing and RNA processing (PubMed:24981863, PubMed:29507755). Acts as a key regulator of m6A methylation by promoting m6A methylation of mRNAs in the 3'-UTR near the stop codon: recruits the catalytic core components METTL3 and METTL14, thereby guiding m6A methylation at specific sites (PubMed:29507755). Required for mRNA polyadenylation via its role in selective m6A methylation: m6A methylation of mRNAs in the 3'-UTR near the stop codon correlating with alternative polyadenylation (APA) (PubMed:29507755).</text>
</comment>
<comment type="subunit">
    <text evidence="3 4 5">Component of the WMM complex, a N6-methyltransferase complex composed of a catalytic subcomplex, named MAC, and of an associated subcomplex, named MACOM (PubMed:29507755). The MAC subcomplex is composed of METTL3 and METTL14. The MACOM subcomplex is composed of WTAP, ZC3H13, CBLL1/HAKAI, VIRMA, and, in some cases of RBM15 (RBM15 or RBM15B) (PubMed:24981863, PubMed:29507755). Interacts with WTAP (PubMed:24100041). Also a component of a MACOM-like complex, named WTAP complex, composed of WTAP, ZC3H13, CBLL1, VIRMA, RBM15, BCLAF1 and THRAP3 (PubMed:24100041). Interacts with NUDT21 and CPSF6 (PubMed:29507755).</text>
</comment>
<comment type="interaction">
    <interactant intactId="EBI-2819293">
        <id>Q69YN4</id>
    </interactant>
    <interactant intactId="EBI-536755">
        <id>O94906</id>
        <label>PRPF6</label>
    </interactant>
    <organismsDiffer>false</organismsDiffer>
    <experiments>2</experiments>
</comment>
<comment type="interaction">
    <interactant intactId="EBI-2819293">
        <id>Q69YN4</id>
    </interactant>
    <interactant intactId="EBI-347088">
        <id>P63104</id>
        <label>YWHAZ</label>
    </interactant>
    <organismsDiffer>false</organismsDiffer>
    <experiments>2</experiments>
</comment>
<comment type="interaction">
    <interactant intactId="EBI-18054817">
        <id>Q69YN4-4</id>
    </interactant>
    <interactant intactId="EBI-12805802">
        <id>Q6B0K9</id>
        <label>HBM</label>
    </interactant>
    <organismsDiffer>false</organismsDiffer>
    <experiments>3</experiments>
</comment>
<comment type="subcellular location">
    <subcellularLocation>
        <location evidence="3">Nucleus speckle</location>
    </subcellularLocation>
    <subcellularLocation>
        <location evidence="3">Nucleus</location>
        <location evidence="3">Nucleoplasm</location>
    </subcellularLocation>
    <subcellularLocation>
        <location evidence="1">Cytoplasm</location>
    </subcellularLocation>
    <text evidence="1">Mainly nuclear with some fraction located in the cytoplasm. ZC3H13 is required to anchor component of the MACOM subcomplex, such as VIRMA, in the nucleus.</text>
</comment>
<comment type="alternative products">
    <event type="alternative splicing"/>
    <isoform>
        <id>Q69YN4-1</id>
        <name>1</name>
        <sequence type="displayed"/>
    </isoform>
    <isoform>
        <id>Q69YN4-2</id>
        <name>2</name>
        <sequence type="described" ref="VSP_029019 VSP_029020"/>
    </isoform>
    <isoform>
        <id>Q69YN4-3</id>
        <name>3</name>
        <sequence type="described" ref="VSP_029021"/>
    </isoform>
    <isoform>
        <id>Q69YN4-4</id>
        <name>4</name>
        <sequence type="described" ref="VSP_029017 VSP_029018"/>
    </isoform>
</comment>
<comment type="similarity">
    <text evidence="10">Belongs to the vir family.</text>
</comment>
<comment type="sequence caution" evidence="10">
    <conflict type="erroneous initiation">
        <sequence resource="EMBL-CDS" id="BAA91316"/>
    </conflict>
</comment>
<comment type="sequence caution" evidence="10">
    <conflict type="erroneous initiation">
        <sequence resource="EMBL-CDS" id="BAB14301"/>
    </conflict>
</comment>
<comment type="sequence caution" evidence="10">
    <conflict type="erroneous initiation">
        <sequence resource="EMBL-CDS" id="CAB55922"/>
    </conflict>
</comment>
<gene>
    <name evidence="11" type="primary">VIRMA</name>
    <name evidence="7" type="synonym">KIAA1429</name>
    <name type="ORF">MSTP054</name>
</gene>
<feature type="initiator methionine" description="Removed" evidence="6 15">
    <location>
        <position position="1"/>
    </location>
</feature>
<feature type="chain" id="PRO_0000308605" description="Protein virilizer homolog">
    <location>
        <begin position="2"/>
        <end position="1812"/>
    </location>
</feature>
<feature type="region of interest" description="Disordered" evidence="2">
    <location>
        <begin position="132"/>
        <end position="302"/>
    </location>
</feature>
<feature type="region of interest" description="Disordered" evidence="2">
    <location>
        <begin position="576"/>
        <end position="596"/>
    </location>
</feature>
<feature type="region of interest" description="Disordered" evidence="2">
    <location>
        <begin position="1616"/>
        <end position="1635"/>
    </location>
</feature>
<feature type="region of interest" description="Disordered" evidence="2">
    <location>
        <begin position="1663"/>
        <end position="1812"/>
    </location>
</feature>
<feature type="compositionally biased region" description="Pro residues" evidence="2">
    <location>
        <begin position="139"/>
        <end position="152"/>
    </location>
</feature>
<feature type="compositionally biased region" description="Basic and acidic residues" evidence="2">
    <location>
        <begin position="160"/>
        <end position="169"/>
    </location>
</feature>
<feature type="compositionally biased region" description="Pro residues" evidence="2">
    <location>
        <begin position="174"/>
        <end position="190"/>
    </location>
</feature>
<feature type="compositionally biased region" description="Polar residues" evidence="2">
    <location>
        <begin position="224"/>
        <end position="233"/>
    </location>
</feature>
<feature type="compositionally biased region" description="Acidic residues" evidence="2">
    <location>
        <begin position="234"/>
        <end position="266"/>
    </location>
</feature>
<feature type="compositionally biased region" description="Acidic residues" evidence="2">
    <location>
        <begin position="274"/>
        <end position="302"/>
    </location>
</feature>
<feature type="compositionally biased region" description="Basic and acidic residues" evidence="2">
    <location>
        <begin position="584"/>
        <end position="596"/>
    </location>
</feature>
<feature type="compositionally biased region" description="Gly residues" evidence="2">
    <location>
        <begin position="1689"/>
        <end position="1698"/>
    </location>
</feature>
<feature type="compositionally biased region" description="Polar residues" evidence="2">
    <location>
        <begin position="1723"/>
        <end position="1748"/>
    </location>
</feature>
<feature type="compositionally biased region" description="Gly residues" evidence="2">
    <location>
        <begin position="1788"/>
        <end position="1802"/>
    </location>
</feature>
<feature type="compositionally biased region" description="Basic residues" evidence="2">
    <location>
        <begin position="1803"/>
        <end position="1812"/>
    </location>
</feature>
<feature type="modified residue" description="N-acetylalanine" evidence="6 15">
    <location>
        <position position="2"/>
    </location>
</feature>
<feature type="modified residue" description="Phosphoserine" evidence="17 19">
    <location>
        <position position="133"/>
    </location>
</feature>
<feature type="modified residue" description="Phosphoserine" evidence="14 16 19 21">
    <location>
        <position position="138"/>
    </location>
</feature>
<feature type="modified residue" description="Phosphoserine" evidence="13 19">
    <location>
        <position position="173"/>
    </location>
</feature>
<feature type="modified residue" description="Phosphothreonine" evidence="13 18 19 21">
    <location>
        <position position="184"/>
    </location>
</feature>
<feature type="modified residue" description="Phosphoserine" evidence="17">
    <location>
        <position position="222"/>
    </location>
</feature>
<feature type="modified residue" description="Phosphotyrosine" evidence="16">
    <location>
        <position position="914"/>
    </location>
</feature>
<feature type="modified residue" description="Phosphoserine" evidence="12 14 16 17 19">
    <location>
        <position position="1579"/>
    </location>
</feature>
<feature type="modified residue" description="Phosphothreonine" evidence="14">
    <location>
        <position position="1708"/>
    </location>
</feature>
<feature type="modified residue" description="Omega-N-methylarginine" evidence="20">
    <location>
        <position position="1723"/>
    </location>
</feature>
<feature type="modified residue" description="Asymmetric dimethylarginine; alternate" evidence="1">
    <location>
        <position position="1741"/>
    </location>
</feature>
<feature type="modified residue" description="Omega-N-methylarginine; alternate" evidence="1">
    <location>
        <position position="1741"/>
    </location>
</feature>
<feature type="modified residue" description="Asymmetric dimethylarginine" evidence="20">
    <location>
        <position position="1773"/>
    </location>
</feature>
<feature type="modified residue" description="Asymmetric dimethylarginine" evidence="20">
    <location>
        <position position="1775"/>
    </location>
</feature>
<feature type="modified residue" description="Asymmetric dimethylarginine" evidence="20">
    <location>
        <position position="1793"/>
    </location>
</feature>
<feature type="splice variant" id="VSP_029017" description="In isoform 4." evidence="8 9">
    <original>IEPHDISVALNTRKLW</original>
    <variation>SLPYNMHLINDCSNTF</variation>
    <location>
        <begin position="1132"/>
        <end position="1147"/>
    </location>
</feature>
<feature type="splice variant" id="VSP_029018" description="In isoform 4." evidence="8 9">
    <location>
        <begin position="1148"/>
        <end position="1812"/>
    </location>
</feature>
<feature type="splice variant" id="VSP_029019" description="In isoform 2." evidence="8">
    <original>SSLRKNSSALHS</original>
    <variation>RDAVEMIMVSWK</variation>
    <location>
        <begin position="1366"/>
        <end position="1377"/>
    </location>
</feature>
<feature type="splice variant" id="VSP_029020" description="In isoform 2." evidence="8">
    <location>
        <begin position="1378"/>
        <end position="1812"/>
    </location>
</feature>
<feature type="splice variant" id="VSP_029021" description="In isoform 3." evidence="7">
    <original>ISSRGGFSGNRGGRGAFHSQNRFFTPPASKGNYSRREGTRGSSWSAQNTPRGNYNESRGGQSNFNRGPLPPLRPLSSTGYRPSPRDRASRGRGGLGPSWASANSGSGGSRGKFVSGGSGRGRHVRSFTR</original>
    <variation>EQEAPVGVLRILLEEITMKVVEARAILTEALFHHYDPLVLQVTAQVLGTVLLEVVGDLDLPGLVQIAAVEAQEESLLVEAVVEVVMYAPLHDKNPFGNILTVYEHFTRTIKIRH</variation>
    <location>
        <begin position="1684"/>
        <end position="1812"/>
    </location>
</feature>
<feature type="sequence variant" id="VAR_036845" description="In dbSNP:rs7814840.">
    <original>I</original>
    <variation>V</variation>
    <location>
        <position position="753"/>
    </location>
</feature>
<feature type="sequence conflict" description="In Ref. 1; CAH10773." evidence="10" ref="1">
    <original>S</original>
    <variation>P</variation>
    <location>
        <position position="97"/>
    </location>
</feature>
<feature type="sequence conflict" description="In Ref. 1; CAH10773." evidence="10" ref="1">
    <location>
        <position position="185"/>
    </location>
</feature>
<feature type="sequence conflict" description="In Ref. 1; CAH10773." evidence="10" ref="1">
    <original>R</original>
    <variation>G</variation>
    <location>
        <position position="524"/>
    </location>
</feature>
<feature type="sequence conflict" description="In Ref. 1; CAH10773." evidence="10" ref="1">
    <original>A</original>
    <variation>P</variation>
    <location>
        <position position="574"/>
    </location>
</feature>
<feature type="sequence conflict" description="In Ref. 1; CAH10773." evidence="10" ref="1">
    <location>
        <position position="664"/>
    </location>
</feature>
<feature type="sequence conflict" description="In Ref. 1; CAB55922." evidence="10" ref="1">
    <original>Q</original>
    <variation>E</variation>
    <location>
        <position position="1183"/>
    </location>
</feature>
<feature type="sequence conflict" description="In Ref. 6; BAB14301." evidence="10" ref="6">
    <original>N</original>
    <variation>D</variation>
    <location>
        <position position="1434"/>
    </location>
</feature>
<feature type="sequence conflict" description="In Ref. 1; CAH10773." evidence="10" ref="1">
    <original>F</original>
    <variation>I</variation>
    <location>
        <position position="1563"/>
    </location>
</feature>
<feature type="strand" evidence="22">
    <location>
        <begin position="349"/>
        <end position="351"/>
    </location>
</feature>
<feature type="strand" evidence="22">
    <location>
        <begin position="354"/>
        <end position="356"/>
    </location>
</feature>
<feature type="helix" evidence="22">
    <location>
        <begin position="358"/>
        <end position="368"/>
    </location>
</feature>
<feature type="helix" evidence="22">
    <location>
        <begin position="375"/>
        <end position="389"/>
    </location>
</feature>
<feature type="strand" evidence="22">
    <location>
        <begin position="392"/>
        <end position="394"/>
    </location>
</feature>
<feature type="helix" evidence="22">
    <location>
        <begin position="398"/>
        <end position="404"/>
    </location>
</feature>
<feature type="helix" evidence="22">
    <location>
        <begin position="407"/>
        <end position="409"/>
    </location>
</feature>
<feature type="turn" evidence="22">
    <location>
        <begin position="410"/>
        <end position="413"/>
    </location>
</feature>
<feature type="helix" evidence="22">
    <location>
        <begin position="414"/>
        <end position="420"/>
    </location>
</feature>
<feature type="helix" evidence="22">
    <location>
        <begin position="427"/>
        <end position="438"/>
    </location>
</feature>
<feature type="helix" evidence="22">
    <location>
        <begin position="441"/>
        <end position="444"/>
    </location>
</feature>
<feature type="turn" evidence="24">
    <location>
        <begin position="449"/>
        <end position="451"/>
    </location>
</feature>
<feature type="helix" evidence="22">
    <location>
        <begin position="452"/>
        <end position="467"/>
    </location>
</feature>
<feature type="helix" evidence="22">
    <location>
        <begin position="470"/>
        <end position="479"/>
    </location>
</feature>
<feature type="helix" evidence="22">
    <location>
        <begin position="483"/>
        <end position="489"/>
    </location>
</feature>
<feature type="strand" evidence="22">
    <location>
        <begin position="492"/>
        <end position="494"/>
    </location>
</feature>
<feature type="helix" evidence="22">
    <location>
        <begin position="497"/>
        <end position="510"/>
    </location>
</feature>
<feature type="helix" evidence="22">
    <location>
        <begin position="514"/>
        <end position="521"/>
    </location>
</feature>
<feature type="helix" evidence="22">
    <location>
        <begin position="530"/>
        <end position="538"/>
    </location>
</feature>
<feature type="helix" evidence="22">
    <location>
        <begin position="544"/>
        <end position="578"/>
    </location>
</feature>
<feature type="helix" evidence="22">
    <location>
        <begin position="621"/>
        <end position="639"/>
    </location>
</feature>
<feature type="helix" evidence="22">
    <location>
        <begin position="641"/>
        <end position="644"/>
    </location>
</feature>
<feature type="strand" evidence="22">
    <location>
        <begin position="656"/>
        <end position="658"/>
    </location>
</feature>
<feature type="helix" evidence="22">
    <location>
        <begin position="669"/>
        <end position="678"/>
    </location>
</feature>
<feature type="helix" evidence="22">
    <location>
        <begin position="681"/>
        <end position="690"/>
    </location>
</feature>
<feature type="helix" evidence="22">
    <location>
        <begin position="692"/>
        <end position="696"/>
    </location>
</feature>
<feature type="helix" evidence="22">
    <location>
        <begin position="698"/>
        <end position="711"/>
    </location>
</feature>
<feature type="helix" evidence="22">
    <location>
        <begin position="715"/>
        <end position="723"/>
    </location>
</feature>
<feature type="helix" evidence="22">
    <location>
        <begin position="725"/>
        <end position="745"/>
    </location>
</feature>
<feature type="strand" evidence="22">
    <location>
        <begin position="748"/>
        <end position="752"/>
    </location>
</feature>
<feature type="helix" evidence="22">
    <location>
        <begin position="757"/>
        <end position="775"/>
    </location>
</feature>
<feature type="turn" evidence="22">
    <location>
        <begin position="776"/>
        <end position="778"/>
    </location>
</feature>
<feature type="strand" evidence="22">
    <location>
        <begin position="779"/>
        <end position="784"/>
    </location>
</feature>
<feature type="helix" evidence="22">
    <location>
        <begin position="790"/>
        <end position="800"/>
    </location>
</feature>
<feature type="helix" evidence="22">
    <location>
        <begin position="801"/>
        <end position="804"/>
    </location>
</feature>
<feature type="helix" evidence="22">
    <location>
        <begin position="806"/>
        <end position="815"/>
    </location>
</feature>
<feature type="strand" evidence="23">
    <location>
        <begin position="818"/>
        <end position="820"/>
    </location>
</feature>
<feature type="helix" evidence="22">
    <location>
        <begin position="823"/>
        <end position="832"/>
    </location>
</feature>
<feature type="turn" evidence="22">
    <location>
        <begin position="833"/>
        <end position="835"/>
    </location>
</feature>
<feature type="strand" evidence="22">
    <location>
        <begin position="836"/>
        <end position="839"/>
    </location>
</feature>
<feature type="strand" evidence="22">
    <location>
        <begin position="841"/>
        <end position="843"/>
    </location>
</feature>
<feature type="helix" evidence="22">
    <location>
        <begin position="846"/>
        <end position="861"/>
    </location>
</feature>
<feature type="helix" evidence="22">
    <location>
        <begin position="866"/>
        <end position="881"/>
    </location>
</feature>
<feature type="helix" evidence="22">
    <location>
        <begin position="888"/>
        <end position="895"/>
    </location>
</feature>
<feature type="helix" evidence="22">
    <location>
        <begin position="896"/>
        <end position="898"/>
    </location>
</feature>
<feature type="helix" evidence="23">
    <location>
        <begin position="905"/>
        <end position="907"/>
    </location>
</feature>
<feature type="helix" evidence="22">
    <location>
        <begin position="908"/>
        <end position="917"/>
    </location>
</feature>
<feature type="strand" evidence="22">
    <location>
        <begin position="922"/>
        <end position="924"/>
    </location>
</feature>
<feature type="helix" evidence="22">
    <location>
        <begin position="929"/>
        <end position="939"/>
    </location>
</feature>
<feature type="strand" evidence="22">
    <location>
        <begin position="952"/>
        <end position="954"/>
    </location>
</feature>
<feature type="helix" evidence="22">
    <location>
        <begin position="955"/>
        <end position="965"/>
    </location>
</feature>
<feature type="helix" evidence="22">
    <location>
        <begin position="970"/>
        <end position="988"/>
    </location>
</feature>
<feature type="helix" evidence="22">
    <location>
        <begin position="996"/>
        <end position="1020"/>
    </location>
</feature>
<feature type="strand" evidence="22">
    <location>
        <begin position="1023"/>
        <end position="1025"/>
    </location>
</feature>
<feature type="helix" evidence="22">
    <location>
        <begin position="1033"/>
        <end position="1044"/>
    </location>
</feature>
<feature type="helix" evidence="22">
    <location>
        <begin position="1055"/>
        <end position="1069"/>
    </location>
</feature>
<feature type="strand" evidence="22">
    <location>
        <begin position="1072"/>
        <end position="1074"/>
    </location>
</feature>
<feature type="helix" evidence="22">
    <location>
        <begin position="1077"/>
        <end position="1079"/>
    </location>
</feature>
<feature type="strand" evidence="22">
    <location>
        <begin position="1080"/>
        <end position="1082"/>
    </location>
</feature>
<feature type="helix" evidence="22">
    <location>
        <begin position="1083"/>
        <end position="1086"/>
    </location>
</feature>
<feature type="helix" evidence="22">
    <location>
        <begin position="1090"/>
        <end position="1099"/>
    </location>
</feature>
<feature type="turn" evidence="22">
    <location>
        <begin position="1100"/>
        <end position="1102"/>
    </location>
</feature>
<feature type="helix" evidence="23">
    <location>
        <begin position="1106"/>
        <end position="1108"/>
    </location>
</feature>
<feature type="helix" evidence="22">
    <location>
        <begin position="1109"/>
        <end position="1119"/>
    </location>
</feature>
<feature type="strand" evidence="22">
    <location>
        <begin position="1126"/>
        <end position="1130"/>
    </location>
</feature>
<feature type="helix" evidence="22">
    <location>
        <begin position="1134"/>
        <end position="1151"/>
    </location>
</feature>
<feature type="helix" evidence="22">
    <location>
        <begin position="1155"/>
        <end position="1164"/>
    </location>
</feature>
<feature type="helix" evidence="22">
    <location>
        <begin position="1171"/>
        <end position="1183"/>
    </location>
</feature>
<feature type="helix" evidence="22">
    <location>
        <begin position="1189"/>
        <end position="1207"/>
    </location>
</feature>
<feature type="strand" evidence="22">
    <location>
        <begin position="1208"/>
        <end position="1210"/>
    </location>
</feature>
<feature type="helix" evidence="22">
    <location>
        <begin position="1220"/>
        <end position="1233"/>
    </location>
</feature>
<feature type="helix" evidence="22">
    <location>
        <begin position="1236"/>
        <end position="1246"/>
    </location>
</feature>
<feature type="strand" evidence="23">
    <location>
        <begin position="1250"/>
        <end position="1252"/>
    </location>
</feature>
<feature type="helix" evidence="22">
    <location>
        <begin position="1254"/>
        <end position="1267"/>
    </location>
</feature>
<feature type="helix" evidence="22">
    <location>
        <begin position="1276"/>
        <end position="1290"/>
    </location>
</feature>
<feature type="strand" evidence="22">
    <location>
        <begin position="1295"/>
        <end position="1298"/>
    </location>
</feature>
<feature type="strand" evidence="22">
    <location>
        <begin position="1303"/>
        <end position="1306"/>
    </location>
</feature>
<feature type="helix" evidence="22">
    <location>
        <begin position="1309"/>
        <end position="1313"/>
    </location>
</feature>
<feature type="turn" evidence="22">
    <location>
        <begin position="1314"/>
        <end position="1316"/>
    </location>
</feature>
<feature type="helix" evidence="22">
    <location>
        <begin position="1320"/>
        <end position="1335"/>
    </location>
</feature>
<feature type="helix" evidence="22">
    <location>
        <begin position="1341"/>
        <end position="1354"/>
    </location>
</feature>
<feature type="helix" evidence="22">
    <location>
        <begin position="1358"/>
        <end position="1368"/>
    </location>
</feature>
<feature type="helix" evidence="22">
    <location>
        <begin position="1374"/>
        <end position="1384"/>
    </location>
</feature>
<feature type="helix" evidence="22">
    <location>
        <begin position="1391"/>
        <end position="1405"/>
    </location>
</feature>
<feature type="helix" evidence="22">
    <location>
        <begin position="1435"/>
        <end position="1442"/>
    </location>
</feature>
<feature type="strand" evidence="23">
    <location>
        <begin position="1444"/>
        <end position="1446"/>
    </location>
</feature>
<feature type="helix" evidence="22">
    <location>
        <begin position="1448"/>
        <end position="1460"/>
    </location>
</feature>
<feature type="strand" evidence="22">
    <location>
        <begin position="1464"/>
        <end position="1466"/>
    </location>
</feature>
<feature type="helix" evidence="22">
    <location>
        <begin position="1469"/>
        <end position="1485"/>
    </location>
</feature>
<feature type="helix" evidence="22">
    <location>
        <begin position="1508"/>
        <end position="1513"/>
    </location>
</feature>
<feature type="strand" evidence="22">
    <location>
        <begin position="1518"/>
        <end position="1520"/>
    </location>
</feature>
<feature type="helix" evidence="22">
    <location>
        <begin position="1526"/>
        <end position="1529"/>
    </location>
</feature>
<feature type="turn" evidence="22">
    <location>
        <begin position="1530"/>
        <end position="1532"/>
    </location>
</feature>
<feature type="strand" evidence="22">
    <location>
        <begin position="1538"/>
        <end position="1541"/>
    </location>
</feature>
<feature type="strand" evidence="22">
    <location>
        <begin position="1549"/>
        <end position="1551"/>
    </location>
</feature>
<feature type="helix" evidence="22">
    <location>
        <begin position="1555"/>
        <end position="1558"/>
    </location>
</feature>
<feature type="strand" evidence="22">
    <location>
        <begin position="1559"/>
        <end position="1561"/>
    </location>
</feature>
<feature type="helix" evidence="22">
    <location>
        <begin position="1566"/>
        <end position="1574"/>
    </location>
</feature>
<feature type="strand" evidence="22">
    <location>
        <begin position="1579"/>
        <end position="1582"/>
    </location>
</feature>
<organism>
    <name type="scientific">Homo sapiens</name>
    <name type="common">Human</name>
    <dbReference type="NCBI Taxonomy" id="9606"/>
    <lineage>
        <taxon>Eukaryota</taxon>
        <taxon>Metazoa</taxon>
        <taxon>Chordata</taxon>
        <taxon>Craniata</taxon>
        <taxon>Vertebrata</taxon>
        <taxon>Euteleostomi</taxon>
        <taxon>Mammalia</taxon>
        <taxon>Eutheria</taxon>
        <taxon>Euarchontoglires</taxon>
        <taxon>Primates</taxon>
        <taxon>Haplorrhini</taxon>
        <taxon>Catarrhini</taxon>
        <taxon>Hominidae</taxon>
        <taxon>Homo</taxon>
    </lineage>
</organism>
<evidence type="ECO:0000250" key="1">
    <source>
        <dbReference type="UniProtKB" id="A2AIV2"/>
    </source>
</evidence>
<evidence type="ECO:0000256" key="2">
    <source>
        <dbReference type="SAM" id="MobiDB-lite"/>
    </source>
</evidence>
<evidence type="ECO:0000269" key="3">
    <source>
    </source>
</evidence>
<evidence type="ECO:0000269" key="4">
    <source>
    </source>
</evidence>
<evidence type="ECO:0000269" key="5">
    <source>
    </source>
</evidence>
<evidence type="ECO:0000269" key="6">
    <source ref="3"/>
</evidence>
<evidence type="ECO:0000303" key="7">
    <source>
    </source>
</evidence>
<evidence type="ECO:0000303" key="8">
    <source>
    </source>
</evidence>
<evidence type="ECO:0000303" key="9">
    <source ref="4"/>
</evidence>
<evidence type="ECO:0000305" key="10"/>
<evidence type="ECO:0000312" key="11">
    <source>
        <dbReference type="HGNC" id="HGNC:24500"/>
    </source>
</evidence>
<evidence type="ECO:0007744" key="12">
    <source>
    </source>
</evidence>
<evidence type="ECO:0007744" key="13">
    <source>
    </source>
</evidence>
<evidence type="ECO:0007744" key="14">
    <source>
    </source>
</evidence>
<evidence type="ECO:0007744" key="15">
    <source>
    </source>
</evidence>
<evidence type="ECO:0007744" key="16">
    <source>
    </source>
</evidence>
<evidence type="ECO:0007744" key="17">
    <source>
    </source>
</evidence>
<evidence type="ECO:0007744" key="18">
    <source>
    </source>
</evidence>
<evidence type="ECO:0007744" key="19">
    <source>
    </source>
</evidence>
<evidence type="ECO:0007744" key="20">
    <source>
    </source>
</evidence>
<evidence type="ECO:0007744" key="21">
    <source>
    </source>
</evidence>
<evidence type="ECO:0007829" key="22">
    <source>
        <dbReference type="PDB" id="7VF2"/>
    </source>
</evidence>
<evidence type="ECO:0007829" key="23">
    <source>
        <dbReference type="PDB" id="7VF5"/>
    </source>
</evidence>
<evidence type="ECO:0007829" key="24">
    <source>
        <dbReference type="PDB" id="7YG4"/>
    </source>
</evidence>
<sequence length="1812" mass="202025">MAVDSAMELLFLDTFKHPSAEQSSHIDVVRFPCVVYINEVRVIPPGVRAHSSLPDNRAYGETSPHTFQLDLFFNNVSKPSAPVFDRLGSLEYDENTSIIFRPNSKVNTDGLVLRGWYNCLTLAIYGSVDRVISHDRDSPPPPPPPPPPPQPQPSLKRNPKHADGEKEDQFNGSPPRPQPRGPRTPPGPPPPDDDEDDPVPLPVSGDKEEDAPHREDYFEPISPDRNSVPQEGQYSDEGEVEEEQQEEGEEDEDDVDVEEEEDEDEDDRRTVDSIPEEEEEDEEEEGEEDEEGEGDDGYEQISSDEDGIADLERETFKYPNFDVEYTAEDLASVPPMTYDPYDRELVPLLYFSCPYKTTFEIEISRMKDQGPDKENSGAIEASVKLTELLDLYREDRGAKWVTALEEIPSLIIKGLSYLQLKNTKQDSLGQLVDWTMQALNLQVALRQPIALNVRQLKAGTKLVSSLAECGAQGVTGLLQAGVISGLFELLFADHVSSSLKLNAFKALDSVISMTEGMEAFLRGRQNEKSGYQKLLELILLDQTVRVVTAGSAILQKCHFYEVLSEIKRLGDHLAEKTSSLPNHSEPDHDTDAGLERTNPEYENEVEASMDMDLLESSNISEGEIERLINLLEEVFHLMETAPHTMIQQPVKSFPTMARITGPPERDDPYPVLFRYLHSHHFLELVTLLLSIPVTSAHPGVLQATKDVLKFLAQSQKGLLFFMSEYEATNLLIRALCHFYDQDEEEGLQSDGVIDDAFALWLQDSTQTLQCITELFSHFQRCTASEETDHSDLLGTLHNLYLITFNPVGRSAVGHVFSLEKNLQSLITLMEYYSKEALGDSKSKKSVAYNYACILILVVVQSSSDVQMLEQHAASLLKLCKADENNAKLQELGKWLEPLKNLRFEINCIPNLIEYVKQNIDNLMTPEGVGLTTALRVLCNVACPPPPVEGQQKDLKWNLAVIQLFSAEGMDTFIRVLQKLNSILTQPWRLHVNMGTTLHRVTTISMARCTLTLLKTMLTELLRGGSFEFKDMRVPSALVTLHMLLCSIPLSGRLDSDEQKIQNDIIDILLTFTQGVNEKLTISEETLANNTWSLMLKEVLSSILKVPEGFFSGLILLSELLPLPLPMQTTQVIEPHDISVALNTRKLWSMHLHVQAKLLQEIVRSFSGTTCQPIQHMLRRICVQLCDLASPTALLIMRTVLDLIVEDLQSTSEDKEKQYTSQTTRLLALLDALASHKACKLAILHLINGTIKGDERYAEIFQDLLALVRSPGDSVIRQQCVEYVTSILQSLCDQDIALILPSSSEGSISELEQLSNSLPNKELMTSICDCLLATLANSESSYNCLLTCVRTMMFLAEHDYGLFHLKSSLRKNSSALHSLLKRVVSTFSKDTGELASSFLEFMRQILNSDTIGCCGDDNGLMEVEGAHTSRTMSINAAELKQLLQSKEESPENLFLELEKLVLEHSKDDDNLDSLLDSVVGLKQMLESSGDPLPLSDQDVEPVLSAPESLQNLFNNRTAYVLADVMDDQLKSMWFTPFQAEEIDTDLDLVKVDLIELSEKCCSDFDLHSELERSFLSEPSSPGRTKTTKGFKLGKHKHETFITSSGKSEYIEPAKRAHVVPPPRGRGRGGFGQGIRPHDIFRQRKQNTSRPPSMHVDDFVAAESKEVVPQDGIPPPKRPLKVSQKISSRGGFSGNRGGRGAFHSQNRFFTPPASKGNYSRREGTRGSSWSAQNTPRGNYNESRGGQSNFNRGPLPPLRPLSSTGYRPSPRDRASRGRGGLGPSWASANSGSGGSRGKFVSGGSGRGRHVRSFTR</sequence>
<dbReference type="EMBL" id="AL117434">
    <property type="protein sequence ID" value="CAB55922.1"/>
    <property type="status" value="ALT_INIT"/>
    <property type="molecule type" value="mRNA"/>
</dbReference>
<dbReference type="EMBL" id="AL832487">
    <property type="protein sequence ID" value="CAH10773.1"/>
    <property type="molecule type" value="mRNA"/>
</dbReference>
<dbReference type="EMBL" id="CR627454">
    <property type="protein sequence ID" value="CAH10535.1"/>
    <property type="molecule type" value="mRNA"/>
</dbReference>
<dbReference type="EMBL" id="BC003701">
    <property type="protein sequence ID" value="AAH03701.2"/>
    <property type="molecule type" value="mRNA"/>
</dbReference>
<dbReference type="EMBL" id="BC053875">
    <property type="status" value="NOT_ANNOTATED_CDS"/>
    <property type="molecule type" value="mRNA"/>
</dbReference>
<dbReference type="EMBL" id="BC069239">
    <property type="protein sequence ID" value="AAH69239.1"/>
    <property type="molecule type" value="mRNA"/>
</dbReference>
<dbReference type="EMBL" id="BC112288">
    <property type="protein sequence ID" value="AAI12289.1"/>
    <property type="molecule type" value="mRNA"/>
</dbReference>
<dbReference type="EMBL" id="BC113380">
    <property type="protein sequence ID" value="AAI13381.1"/>
    <property type="molecule type" value="mRNA"/>
</dbReference>
<dbReference type="EMBL" id="AF116724">
    <property type="protein sequence ID" value="AAO15300.1"/>
    <property type="molecule type" value="mRNA"/>
</dbReference>
<dbReference type="EMBL" id="AB037850">
    <property type="protein sequence ID" value="BAA92667.1"/>
    <property type="molecule type" value="mRNA"/>
</dbReference>
<dbReference type="EMBL" id="AK000668">
    <property type="protein sequence ID" value="BAA91316.1"/>
    <property type="status" value="ALT_INIT"/>
    <property type="molecule type" value="mRNA"/>
</dbReference>
<dbReference type="EMBL" id="AK022906">
    <property type="protein sequence ID" value="BAB14301.1"/>
    <property type="status" value="ALT_INIT"/>
    <property type="molecule type" value="mRNA"/>
</dbReference>
<dbReference type="CCDS" id="CCDS34923.1">
    <molecule id="Q69YN4-1"/>
</dbReference>
<dbReference type="CCDS" id="CCDS47894.1">
    <molecule id="Q69YN4-4"/>
</dbReference>
<dbReference type="PIR" id="T17232">
    <property type="entry name" value="T17232"/>
</dbReference>
<dbReference type="RefSeq" id="NP_056311.2">
    <molecule id="Q69YN4-1"/>
    <property type="nucleotide sequence ID" value="NM_015496.4"/>
</dbReference>
<dbReference type="RefSeq" id="NP_892121.1">
    <molecule id="Q69YN4-4"/>
    <property type="nucleotide sequence ID" value="NM_183009.3"/>
</dbReference>
<dbReference type="PDB" id="7VF2">
    <property type="method" value="EM"/>
    <property type="resolution" value="3.00 A"/>
    <property type="chains" value="A=1-1812"/>
</dbReference>
<dbReference type="PDB" id="7VF5">
    <property type="method" value="EM"/>
    <property type="resolution" value="3.00 A"/>
    <property type="chains" value="A=1-1812"/>
</dbReference>
<dbReference type="PDB" id="7YG4">
    <property type="method" value="EM"/>
    <property type="resolution" value="3.10 A"/>
    <property type="chains" value="A=381-1486"/>
</dbReference>
<dbReference type="PDBsum" id="7VF2"/>
<dbReference type="PDBsum" id="7VF5"/>
<dbReference type="PDBsum" id="7YG4"/>
<dbReference type="EMDB" id="EMD-31946"/>
<dbReference type="EMDB" id="EMD-31947"/>
<dbReference type="EMDB" id="EMD-33807"/>
<dbReference type="SMR" id="Q69YN4"/>
<dbReference type="BioGRID" id="117452">
    <property type="interactions" value="2940"/>
</dbReference>
<dbReference type="ComplexPortal" id="CPX-1605">
    <property type="entry name" value="WMM N6-adenosine-methyltransferase complex"/>
</dbReference>
<dbReference type="CORUM" id="Q69YN4"/>
<dbReference type="FunCoup" id="Q69YN4">
    <property type="interactions" value="5147"/>
</dbReference>
<dbReference type="IntAct" id="Q69YN4">
    <property type="interactions" value="77"/>
</dbReference>
<dbReference type="MINT" id="Q69YN4"/>
<dbReference type="STRING" id="9606.ENSP00000297591"/>
<dbReference type="GlyGen" id="Q69YN4">
    <property type="glycosylation" value="2 sites, 2 O-linked glycans (2 sites)"/>
</dbReference>
<dbReference type="iPTMnet" id="Q69YN4"/>
<dbReference type="PhosphoSitePlus" id="Q69YN4"/>
<dbReference type="SwissPalm" id="Q69YN4"/>
<dbReference type="BioMuta" id="VIRMA"/>
<dbReference type="DMDM" id="160221326"/>
<dbReference type="jPOST" id="Q69YN4"/>
<dbReference type="MassIVE" id="Q69YN4"/>
<dbReference type="PaxDb" id="9606-ENSP00000297591"/>
<dbReference type="PeptideAtlas" id="Q69YN4"/>
<dbReference type="ProteomicsDB" id="66164">
    <molecule id="Q69YN4-1"/>
</dbReference>
<dbReference type="ProteomicsDB" id="66165">
    <molecule id="Q69YN4-2"/>
</dbReference>
<dbReference type="ProteomicsDB" id="66166">
    <molecule id="Q69YN4-3"/>
</dbReference>
<dbReference type="ProteomicsDB" id="66167">
    <molecule id="Q69YN4-4"/>
</dbReference>
<dbReference type="Pumba" id="Q69YN4"/>
<dbReference type="Antibodypedia" id="25815">
    <property type="antibodies" value="54 antibodies from 18 providers"/>
</dbReference>
<dbReference type="DNASU" id="25962"/>
<dbReference type="Ensembl" id="ENST00000297591.10">
    <molecule id="Q69YN4-1"/>
    <property type="protein sequence ID" value="ENSP00000297591.5"/>
    <property type="gene ID" value="ENSG00000164944.12"/>
</dbReference>
<dbReference type="Ensembl" id="ENST00000421249.2">
    <molecule id="Q69YN4-4"/>
    <property type="protein sequence ID" value="ENSP00000398390.2"/>
    <property type="gene ID" value="ENSG00000164944.12"/>
</dbReference>
<dbReference type="GeneID" id="25962"/>
<dbReference type="KEGG" id="hsa:25962"/>
<dbReference type="MANE-Select" id="ENST00000297591.10">
    <property type="protein sequence ID" value="ENSP00000297591.5"/>
    <property type="RefSeq nucleotide sequence ID" value="NM_015496.5"/>
    <property type="RefSeq protein sequence ID" value="NP_056311.2"/>
</dbReference>
<dbReference type="UCSC" id="uc003ygo.3">
    <molecule id="Q69YN4-1"/>
    <property type="organism name" value="human"/>
</dbReference>
<dbReference type="AGR" id="HGNC:24500"/>
<dbReference type="CTD" id="25962"/>
<dbReference type="DisGeNET" id="25962"/>
<dbReference type="GeneCards" id="VIRMA"/>
<dbReference type="HGNC" id="HGNC:24500">
    <property type="gene designation" value="VIRMA"/>
</dbReference>
<dbReference type="HPA" id="ENSG00000164944">
    <property type="expression patterns" value="Low tissue specificity"/>
</dbReference>
<dbReference type="MIM" id="616447">
    <property type="type" value="gene"/>
</dbReference>
<dbReference type="neXtProt" id="NX_Q69YN4"/>
<dbReference type="OpenTargets" id="ENSG00000164944"/>
<dbReference type="PharmGKB" id="PA142671611"/>
<dbReference type="VEuPathDB" id="HostDB:ENSG00000164944"/>
<dbReference type="eggNOG" id="KOG4822">
    <property type="taxonomic scope" value="Eukaryota"/>
</dbReference>
<dbReference type="GeneTree" id="ENSGT00390000002833"/>
<dbReference type="HOGENOM" id="CLU_002368_0_0_1"/>
<dbReference type="InParanoid" id="Q69YN4"/>
<dbReference type="OMA" id="YWLEPLP"/>
<dbReference type="OrthoDB" id="2011702at2759"/>
<dbReference type="PAN-GO" id="Q69YN4">
    <property type="GO annotations" value="2 GO annotations based on evolutionary models"/>
</dbReference>
<dbReference type="PhylomeDB" id="Q69YN4"/>
<dbReference type="TreeFam" id="TF323505"/>
<dbReference type="PathwayCommons" id="Q69YN4"/>
<dbReference type="SignaLink" id="Q69YN4"/>
<dbReference type="BioGRID-ORCS" id="25962">
    <property type="hits" value="713 hits in 1167 CRISPR screens"/>
</dbReference>
<dbReference type="ChiTaRS" id="KIAA1429">
    <property type="organism name" value="human"/>
</dbReference>
<dbReference type="GenomeRNAi" id="25962"/>
<dbReference type="Pharos" id="Q69YN4">
    <property type="development level" value="Tbio"/>
</dbReference>
<dbReference type="PRO" id="PR:Q69YN4"/>
<dbReference type="Proteomes" id="UP000005640">
    <property type="component" value="Chromosome 8"/>
</dbReference>
<dbReference type="RNAct" id="Q69YN4">
    <property type="molecule type" value="protein"/>
</dbReference>
<dbReference type="Bgee" id="ENSG00000164944">
    <property type="expression patterns" value="Expressed in ventricular zone and 183 other cell types or tissues"/>
</dbReference>
<dbReference type="ExpressionAtlas" id="Q69YN4">
    <property type="expression patterns" value="baseline and differential"/>
</dbReference>
<dbReference type="GO" id="GO:0005829">
    <property type="term" value="C:cytosol"/>
    <property type="evidence" value="ECO:0000314"/>
    <property type="project" value="HPA"/>
</dbReference>
<dbReference type="GO" id="GO:0016604">
    <property type="term" value="C:nuclear body"/>
    <property type="evidence" value="ECO:0000314"/>
    <property type="project" value="HPA"/>
</dbReference>
<dbReference type="GO" id="GO:0016607">
    <property type="term" value="C:nuclear speck"/>
    <property type="evidence" value="ECO:0000314"/>
    <property type="project" value="UniProtKB"/>
</dbReference>
<dbReference type="GO" id="GO:0005654">
    <property type="term" value="C:nucleoplasm"/>
    <property type="evidence" value="ECO:0000314"/>
    <property type="project" value="HPA"/>
</dbReference>
<dbReference type="GO" id="GO:0005634">
    <property type="term" value="C:nucleus"/>
    <property type="evidence" value="ECO:0000303"/>
    <property type="project" value="ComplexPortal"/>
</dbReference>
<dbReference type="GO" id="GO:0036396">
    <property type="term" value="C:RNA N6-methyladenosine methyltransferase complex"/>
    <property type="evidence" value="ECO:0000314"/>
    <property type="project" value="UniProtKB"/>
</dbReference>
<dbReference type="GO" id="GO:0003723">
    <property type="term" value="F:RNA binding"/>
    <property type="evidence" value="ECO:0007005"/>
    <property type="project" value="UniProtKB"/>
</dbReference>
<dbReference type="GO" id="GO:0006397">
    <property type="term" value="P:mRNA processing"/>
    <property type="evidence" value="ECO:0000314"/>
    <property type="project" value="UniProtKB"/>
</dbReference>
<dbReference type="GO" id="GO:0008380">
    <property type="term" value="P:RNA splicing"/>
    <property type="evidence" value="ECO:0007669"/>
    <property type="project" value="UniProtKB-KW"/>
</dbReference>
<dbReference type="InterPro" id="IPR016024">
    <property type="entry name" value="ARM-type_fold"/>
</dbReference>
<dbReference type="InterPro" id="IPR031801">
    <property type="entry name" value="VIR_N"/>
</dbReference>
<dbReference type="InterPro" id="IPR026736">
    <property type="entry name" value="Virilizer"/>
</dbReference>
<dbReference type="PANTHER" id="PTHR23185">
    <property type="entry name" value="PROTEIN VIRILIZER HOMOLOG"/>
    <property type="match status" value="1"/>
</dbReference>
<dbReference type="PANTHER" id="PTHR23185:SF0">
    <property type="entry name" value="PROTEIN VIRILIZER HOMOLOG"/>
    <property type="match status" value="1"/>
</dbReference>
<dbReference type="Pfam" id="PF15912">
    <property type="entry name" value="VIR_N"/>
    <property type="match status" value="1"/>
</dbReference>
<dbReference type="SUPFAM" id="SSF48371">
    <property type="entry name" value="ARM repeat"/>
    <property type="match status" value="1"/>
</dbReference>